<feature type="chain" id="PRO_0000209013" description="Low affinity potassium transport system protein Kup">
    <location>
        <begin position="1"/>
        <end position="622"/>
    </location>
</feature>
<feature type="transmembrane region" description="Helical" evidence="1">
    <location>
        <begin position="9"/>
        <end position="29"/>
    </location>
</feature>
<feature type="transmembrane region" description="Helical" evidence="1">
    <location>
        <begin position="49"/>
        <end position="69"/>
    </location>
</feature>
<feature type="transmembrane region" description="Helical" evidence="1">
    <location>
        <begin position="103"/>
        <end position="123"/>
    </location>
</feature>
<feature type="transmembrane region" description="Helical" evidence="1">
    <location>
        <begin position="137"/>
        <end position="157"/>
    </location>
</feature>
<feature type="transmembrane region" description="Helical" evidence="1">
    <location>
        <begin position="165"/>
        <end position="185"/>
    </location>
</feature>
<feature type="transmembrane region" description="Helical" evidence="1">
    <location>
        <begin position="213"/>
        <end position="233"/>
    </location>
</feature>
<feature type="transmembrane region" description="Helical" evidence="1">
    <location>
        <begin position="247"/>
        <end position="267"/>
    </location>
</feature>
<feature type="transmembrane region" description="Helical" evidence="1">
    <location>
        <begin position="276"/>
        <end position="296"/>
    </location>
</feature>
<feature type="transmembrane region" description="Helical" evidence="1">
    <location>
        <begin position="337"/>
        <end position="357"/>
    </location>
</feature>
<feature type="transmembrane region" description="Helical" evidence="1">
    <location>
        <begin position="363"/>
        <end position="383"/>
    </location>
</feature>
<feature type="transmembrane region" description="Helical" evidence="1">
    <location>
        <begin position="396"/>
        <end position="416"/>
    </location>
</feature>
<feature type="transmembrane region" description="Helical" evidence="1">
    <location>
        <begin position="419"/>
        <end position="439"/>
    </location>
</feature>
<protein>
    <recommendedName>
        <fullName evidence="1">Low affinity potassium transport system protein Kup</fullName>
    </recommendedName>
    <alternativeName>
        <fullName evidence="1">Kup system potassium uptake protein</fullName>
    </alternativeName>
</protein>
<proteinExistence type="inferred from homology"/>
<comment type="function">
    <text evidence="1">Responsible for the low-affinity transport of potassium into the cell. Likely operates as a K(+):H(+) symporter.</text>
</comment>
<comment type="catalytic activity">
    <reaction evidence="1">
        <text>K(+)(in) + H(+)(in) = K(+)(out) + H(+)(out)</text>
        <dbReference type="Rhea" id="RHEA:28490"/>
        <dbReference type="ChEBI" id="CHEBI:15378"/>
        <dbReference type="ChEBI" id="CHEBI:29103"/>
    </reaction>
    <physiologicalReaction direction="right-to-left" evidence="1">
        <dbReference type="Rhea" id="RHEA:28492"/>
    </physiologicalReaction>
</comment>
<comment type="subcellular location">
    <subcellularLocation>
        <location evidence="1">Cell inner membrane</location>
        <topology evidence="1">Multi-pass membrane protein</topology>
    </subcellularLocation>
</comment>
<comment type="similarity">
    <text evidence="1 2">Belongs to the HAK/KUP transporter (TC 2.A.72) family.</text>
</comment>
<accession>Q8XAW9</accession>
<gene>
    <name evidence="1" type="primary">kup</name>
    <name type="synonym">trkD</name>
    <name type="ordered locus">Z5248</name>
    <name type="ordered locus">ECs4689</name>
</gene>
<reference key="1">
    <citation type="journal article" date="2001" name="Nature">
        <title>Genome sequence of enterohaemorrhagic Escherichia coli O157:H7.</title>
        <authorList>
            <person name="Perna N.T."/>
            <person name="Plunkett G. III"/>
            <person name="Burland V."/>
            <person name="Mau B."/>
            <person name="Glasner J.D."/>
            <person name="Rose D.J."/>
            <person name="Mayhew G.F."/>
            <person name="Evans P.S."/>
            <person name="Gregor J."/>
            <person name="Kirkpatrick H.A."/>
            <person name="Posfai G."/>
            <person name="Hackett J."/>
            <person name="Klink S."/>
            <person name="Boutin A."/>
            <person name="Shao Y."/>
            <person name="Miller L."/>
            <person name="Grotbeck E.J."/>
            <person name="Davis N.W."/>
            <person name="Lim A."/>
            <person name="Dimalanta E.T."/>
            <person name="Potamousis K."/>
            <person name="Apodaca J."/>
            <person name="Anantharaman T.S."/>
            <person name="Lin J."/>
            <person name="Yen G."/>
            <person name="Schwartz D.C."/>
            <person name="Welch R.A."/>
            <person name="Blattner F.R."/>
        </authorList>
    </citation>
    <scope>NUCLEOTIDE SEQUENCE [LARGE SCALE GENOMIC DNA]</scope>
    <source>
        <strain>O157:H7 / EDL933 / ATCC 700927 / EHEC</strain>
    </source>
</reference>
<reference key="2">
    <citation type="journal article" date="2001" name="DNA Res.">
        <title>Complete genome sequence of enterohemorrhagic Escherichia coli O157:H7 and genomic comparison with a laboratory strain K-12.</title>
        <authorList>
            <person name="Hayashi T."/>
            <person name="Makino K."/>
            <person name="Ohnishi M."/>
            <person name="Kurokawa K."/>
            <person name="Ishii K."/>
            <person name="Yokoyama K."/>
            <person name="Han C.-G."/>
            <person name="Ohtsubo E."/>
            <person name="Nakayama K."/>
            <person name="Murata T."/>
            <person name="Tanaka M."/>
            <person name="Tobe T."/>
            <person name="Iida T."/>
            <person name="Takami H."/>
            <person name="Honda T."/>
            <person name="Sasakawa C."/>
            <person name="Ogasawara N."/>
            <person name="Yasunaga T."/>
            <person name="Kuhara S."/>
            <person name="Shiba T."/>
            <person name="Hattori M."/>
            <person name="Shinagawa H."/>
        </authorList>
    </citation>
    <scope>NUCLEOTIDE SEQUENCE [LARGE SCALE GENOMIC DNA]</scope>
    <source>
        <strain>O157:H7 / Sakai / RIMD 0509952 / EHEC</strain>
    </source>
</reference>
<organism>
    <name type="scientific">Escherichia coli O157:H7</name>
    <dbReference type="NCBI Taxonomy" id="83334"/>
    <lineage>
        <taxon>Bacteria</taxon>
        <taxon>Pseudomonadati</taxon>
        <taxon>Pseudomonadota</taxon>
        <taxon>Gammaproteobacteria</taxon>
        <taxon>Enterobacterales</taxon>
        <taxon>Enterobacteriaceae</taxon>
        <taxon>Escherichia</taxon>
    </lineage>
</organism>
<sequence length="622" mass="69351">MSTDNKQSLPAITLAAIGVVYGDIGTSPLYTLRECLSGQFGFGVERDAVFGFLSLIFWLLIFVVSIKYLTFVMRADNAGEGGILTLMSLAGRNTSARTTSMLVIMGLIGGSFFYGEVVITPAISVMSAIEGLEIVAPQLDTWIVPLSIIVLTLLFMIQKHGTAMVGKLFAPIMLTWFLILAGLGLRSIIANQEVLYALNPMWAVHFFLEYKTVSFIALGAVVLSITGVEALYADMGHFGKFPIRLAWFTVVLPSLTLNYFGQGALLLKNPEAIKNPFFLLAPDWALIPLLIIAALATVIASQAVISGVFSLTRQAVRLGYLSPMRIIHTSEMESGQIYIPFVNWMLYVAVVIVIVSFEHSSNLAAAYGIAVTGTMVLTSILSTTVARQNWHWNKYFVALILIAFLCVDIPLFTANLDKLLSGGWLPLSLGTVMFIVMTTWKSERFRLLRRMHEHGNSLEAMIASLEKSPPVRVPGTAVYMSRAINVIPFALMHNLKHNKVLHERVILLTLRTEDAPYVHNVRRVQIEQLSPTFWRVVASYGWRETPNVEEVFHRCGLEGLSCRMMETSFFMSHESLILGKRPWYLRLRGKLYLLLQRNALRAPDQFEIPPNRVIELGTQVEI</sequence>
<keyword id="KW-0997">Cell inner membrane</keyword>
<keyword id="KW-1003">Cell membrane</keyword>
<keyword id="KW-0406">Ion transport</keyword>
<keyword id="KW-0472">Membrane</keyword>
<keyword id="KW-0630">Potassium</keyword>
<keyword id="KW-0633">Potassium transport</keyword>
<keyword id="KW-1185">Reference proteome</keyword>
<keyword id="KW-0769">Symport</keyword>
<keyword id="KW-0812">Transmembrane</keyword>
<keyword id="KW-1133">Transmembrane helix</keyword>
<keyword id="KW-0813">Transport</keyword>
<evidence type="ECO:0000255" key="1">
    <source>
        <dbReference type="HAMAP-Rule" id="MF_01522"/>
    </source>
</evidence>
<evidence type="ECO:0000305" key="2"/>
<dbReference type="EMBL" id="AE005174">
    <property type="protein sequence ID" value="AAG58950.1"/>
    <property type="molecule type" value="Genomic_DNA"/>
</dbReference>
<dbReference type="EMBL" id="BA000007">
    <property type="protein sequence ID" value="BAB38112.1"/>
    <property type="molecule type" value="Genomic_DNA"/>
</dbReference>
<dbReference type="PIR" id="A98215">
    <property type="entry name" value="A98215"/>
</dbReference>
<dbReference type="PIR" id="B86061">
    <property type="entry name" value="B86061"/>
</dbReference>
<dbReference type="RefSeq" id="NP_312716.1">
    <property type="nucleotide sequence ID" value="NC_002695.1"/>
</dbReference>
<dbReference type="RefSeq" id="WP_000102329.1">
    <property type="nucleotide sequence ID" value="NZ_VOAI01000011.1"/>
</dbReference>
<dbReference type="STRING" id="155864.Z5248"/>
<dbReference type="GeneID" id="915317"/>
<dbReference type="KEGG" id="ece:Z5248"/>
<dbReference type="KEGG" id="ecs:ECs_4689"/>
<dbReference type="PATRIC" id="fig|386585.9.peg.4895"/>
<dbReference type="eggNOG" id="COG3158">
    <property type="taxonomic scope" value="Bacteria"/>
</dbReference>
<dbReference type="HOGENOM" id="CLU_008142_4_2_6"/>
<dbReference type="OMA" id="MLLLWKW"/>
<dbReference type="Proteomes" id="UP000000558">
    <property type="component" value="Chromosome"/>
</dbReference>
<dbReference type="Proteomes" id="UP000002519">
    <property type="component" value="Chromosome"/>
</dbReference>
<dbReference type="GO" id="GO:0005886">
    <property type="term" value="C:plasma membrane"/>
    <property type="evidence" value="ECO:0007669"/>
    <property type="project" value="UniProtKB-SubCell"/>
</dbReference>
<dbReference type="GO" id="GO:0015079">
    <property type="term" value="F:potassium ion transmembrane transporter activity"/>
    <property type="evidence" value="ECO:0007669"/>
    <property type="project" value="UniProtKB-UniRule"/>
</dbReference>
<dbReference type="GO" id="GO:0015293">
    <property type="term" value="F:symporter activity"/>
    <property type="evidence" value="ECO:0007669"/>
    <property type="project" value="UniProtKB-UniRule"/>
</dbReference>
<dbReference type="HAMAP" id="MF_01522">
    <property type="entry name" value="Kup"/>
    <property type="match status" value="1"/>
</dbReference>
<dbReference type="InterPro" id="IPR003855">
    <property type="entry name" value="K+_transporter"/>
</dbReference>
<dbReference type="InterPro" id="IPR053952">
    <property type="entry name" value="K_trans_C"/>
</dbReference>
<dbReference type="InterPro" id="IPR053951">
    <property type="entry name" value="K_trans_N"/>
</dbReference>
<dbReference type="InterPro" id="IPR023051">
    <property type="entry name" value="Kup"/>
</dbReference>
<dbReference type="NCBIfam" id="TIGR00794">
    <property type="entry name" value="kup"/>
    <property type="match status" value="1"/>
</dbReference>
<dbReference type="NCBIfam" id="NF008015">
    <property type="entry name" value="PRK10745.1"/>
    <property type="match status" value="1"/>
</dbReference>
<dbReference type="PANTHER" id="PTHR30540:SF79">
    <property type="entry name" value="LOW AFFINITY POTASSIUM TRANSPORT SYSTEM PROTEIN KUP"/>
    <property type="match status" value="1"/>
</dbReference>
<dbReference type="PANTHER" id="PTHR30540">
    <property type="entry name" value="OSMOTIC STRESS POTASSIUM TRANSPORTER"/>
    <property type="match status" value="1"/>
</dbReference>
<dbReference type="Pfam" id="PF02705">
    <property type="entry name" value="K_trans"/>
    <property type="match status" value="1"/>
</dbReference>
<dbReference type="Pfam" id="PF22776">
    <property type="entry name" value="K_trans_C"/>
    <property type="match status" value="1"/>
</dbReference>
<name>KUP_ECO57</name>